<name>SYD_PORGI</name>
<keyword id="KW-0030">Aminoacyl-tRNA synthetase</keyword>
<keyword id="KW-0067">ATP-binding</keyword>
<keyword id="KW-0963">Cytoplasm</keyword>
<keyword id="KW-0436">Ligase</keyword>
<keyword id="KW-0547">Nucleotide-binding</keyword>
<keyword id="KW-0648">Protein biosynthesis</keyword>
<keyword id="KW-1185">Reference proteome</keyword>
<sequence length="587" mass="66998">MYRTNTCGELRLSHLQQTVTLCGWVQRVRRMGGMTFVDLRDRYGTTQLVFNRDSAPAELCDRAEDLGREWVIRATGTVMERSSKNPNIPTGDIEIAVGEMDVLNRSEVPPFTIEDETDGGDDLRMKYRYLDLRRHCVRSNMELRHRMALEVRKYLDGEGFLEVETPMLIKSTPEGARDFVVPSRMNPGQFYALPQSPQTFKQLLMVSGFDRYFQIVKCFRDEDLRADRQPEFTQIDCEMSFVEQEDVLSTFEGMAKHLFRTIRHVEISEAFPRMTWHDAMKYYGSDKPDTRFDMRFVELMDVLKGHGFSVFDSAAYIGGICAKGAGSYTRKQLDALTDFVKRPQVGAKGMVYARVESDGSVKSSVDKFYTQETLQELRRTMEAEPGDLILILSGDDLMKTRKQLCELRLEVGSQLGLRDKNKFSCLWVVDFPLFEWDEETKRFYAMHHPFTSPKPEDIPLLDTDPGAVRANAYDMVINGVEVGGGSIRIHDSALQQKMFELLGFTPEKAQEQFGFLMNAFKYGAPPHGGLAYGLDRWVSLFAGLDSIRDCIAFPKNNAGRDVMIDAPSVIDEAQLQELFLELIPNEN</sequence>
<protein>
    <recommendedName>
        <fullName evidence="1">Aspartate--tRNA ligase</fullName>
        <ecNumber evidence="1">6.1.1.12</ecNumber>
    </recommendedName>
    <alternativeName>
        <fullName evidence="1">Aspartyl-tRNA synthetase</fullName>
        <shortName evidence="1">AspRS</shortName>
    </alternativeName>
</protein>
<accession>Q7MXM0</accession>
<gene>
    <name evidence="1" type="primary">aspS</name>
    <name type="ordered locus">PG_0153</name>
</gene>
<comment type="function">
    <text evidence="1">Catalyzes the attachment of L-aspartate to tRNA(Asp) in a two-step reaction: L-aspartate is first activated by ATP to form Asp-AMP and then transferred to the acceptor end of tRNA(Asp).</text>
</comment>
<comment type="catalytic activity">
    <reaction evidence="1">
        <text>tRNA(Asp) + L-aspartate + ATP = L-aspartyl-tRNA(Asp) + AMP + diphosphate</text>
        <dbReference type="Rhea" id="RHEA:19649"/>
        <dbReference type="Rhea" id="RHEA-COMP:9660"/>
        <dbReference type="Rhea" id="RHEA-COMP:9678"/>
        <dbReference type="ChEBI" id="CHEBI:29991"/>
        <dbReference type="ChEBI" id="CHEBI:30616"/>
        <dbReference type="ChEBI" id="CHEBI:33019"/>
        <dbReference type="ChEBI" id="CHEBI:78442"/>
        <dbReference type="ChEBI" id="CHEBI:78516"/>
        <dbReference type="ChEBI" id="CHEBI:456215"/>
        <dbReference type="EC" id="6.1.1.12"/>
    </reaction>
</comment>
<comment type="subunit">
    <text evidence="1">Homodimer.</text>
</comment>
<comment type="subcellular location">
    <subcellularLocation>
        <location evidence="1">Cytoplasm</location>
    </subcellularLocation>
</comment>
<comment type="similarity">
    <text evidence="1">Belongs to the class-II aminoacyl-tRNA synthetase family. Type 1 subfamily.</text>
</comment>
<dbReference type="EC" id="6.1.1.12" evidence="1"/>
<dbReference type="EMBL" id="AE015924">
    <property type="protein sequence ID" value="AAQ65394.1"/>
    <property type="molecule type" value="Genomic_DNA"/>
</dbReference>
<dbReference type="RefSeq" id="WP_005875297.1">
    <property type="nucleotide sequence ID" value="NC_002950.2"/>
</dbReference>
<dbReference type="SMR" id="Q7MXM0"/>
<dbReference type="STRING" id="242619.PG_0153"/>
<dbReference type="EnsemblBacteria" id="AAQ65394">
    <property type="protein sequence ID" value="AAQ65394"/>
    <property type="gene ID" value="PG_0153"/>
</dbReference>
<dbReference type="KEGG" id="pgi:PG_0153"/>
<dbReference type="eggNOG" id="COG0173">
    <property type="taxonomic scope" value="Bacteria"/>
</dbReference>
<dbReference type="HOGENOM" id="CLU_014330_3_2_10"/>
<dbReference type="Proteomes" id="UP000000588">
    <property type="component" value="Chromosome"/>
</dbReference>
<dbReference type="GO" id="GO:0005737">
    <property type="term" value="C:cytoplasm"/>
    <property type="evidence" value="ECO:0007669"/>
    <property type="project" value="UniProtKB-SubCell"/>
</dbReference>
<dbReference type="GO" id="GO:0004815">
    <property type="term" value="F:aspartate-tRNA ligase activity"/>
    <property type="evidence" value="ECO:0007669"/>
    <property type="project" value="UniProtKB-UniRule"/>
</dbReference>
<dbReference type="GO" id="GO:0005524">
    <property type="term" value="F:ATP binding"/>
    <property type="evidence" value="ECO:0007669"/>
    <property type="project" value="UniProtKB-UniRule"/>
</dbReference>
<dbReference type="GO" id="GO:0003676">
    <property type="term" value="F:nucleic acid binding"/>
    <property type="evidence" value="ECO:0007669"/>
    <property type="project" value="InterPro"/>
</dbReference>
<dbReference type="GO" id="GO:0006422">
    <property type="term" value="P:aspartyl-tRNA aminoacylation"/>
    <property type="evidence" value="ECO:0007669"/>
    <property type="project" value="UniProtKB-UniRule"/>
</dbReference>
<dbReference type="CDD" id="cd00777">
    <property type="entry name" value="AspRS_core"/>
    <property type="match status" value="1"/>
</dbReference>
<dbReference type="CDD" id="cd04317">
    <property type="entry name" value="EcAspRS_like_N"/>
    <property type="match status" value="1"/>
</dbReference>
<dbReference type="Gene3D" id="3.30.930.10">
    <property type="entry name" value="Bira Bifunctional Protein, Domain 2"/>
    <property type="match status" value="1"/>
</dbReference>
<dbReference type="Gene3D" id="3.30.1360.30">
    <property type="entry name" value="GAD-like domain"/>
    <property type="match status" value="1"/>
</dbReference>
<dbReference type="Gene3D" id="2.40.50.140">
    <property type="entry name" value="Nucleic acid-binding proteins"/>
    <property type="match status" value="1"/>
</dbReference>
<dbReference type="HAMAP" id="MF_00044">
    <property type="entry name" value="Asp_tRNA_synth_type1"/>
    <property type="match status" value="1"/>
</dbReference>
<dbReference type="InterPro" id="IPR004364">
    <property type="entry name" value="Aa-tRNA-synt_II"/>
</dbReference>
<dbReference type="InterPro" id="IPR006195">
    <property type="entry name" value="aa-tRNA-synth_II"/>
</dbReference>
<dbReference type="InterPro" id="IPR045864">
    <property type="entry name" value="aa-tRNA-synth_II/BPL/LPL"/>
</dbReference>
<dbReference type="InterPro" id="IPR004524">
    <property type="entry name" value="Asp-tRNA-ligase_1"/>
</dbReference>
<dbReference type="InterPro" id="IPR047089">
    <property type="entry name" value="Asp-tRNA-ligase_1_N"/>
</dbReference>
<dbReference type="InterPro" id="IPR002312">
    <property type="entry name" value="Asp/Asn-tRNA-synth_IIb"/>
</dbReference>
<dbReference type="InterPro" id="IPR047090">
    <property type="entry name" value="AspRS_core"/>
</dbReference>
<dbReference type="InterPro" id="IPR004115">
    <property type="entry name" value="GAD-like_sf"/>
</dbReference>
<dbReference type="InterPro" id="IPR029351">
    <property type="entry name" value="GAD_dom"/>
</dbReference>
<dbReference type="InterPro" id="IPR012340">
    <property type="entry name" value="NA-bd_OB-fold"/>
</dbReference>
<dbReference type="InterPro" id="IPR004365">
    <property type="entry name" value="NA-bd_OB_tRNA"/>
</dbReference>
<dbReference type="NCBIfam" id="TIGR00459">
    <property type="entry name" value="aspS_bact"/>
    <property type="match status" value="1"/>
</dbReference>
<dbReference type="NCBIfam" id="NF001750">
    <property type="entry name" value="PRK00476.1"/>
    <property type="match status" value="1"/>
</dbReference>
<dbReference type="PANTHER" id="PTHR22594:SF5">
    <property type="entry name" value="ASPARTATE--TRNA LIGASE, MITOCHONDRIAL"/>
    <property type="match status" value="1"/>
</dbReference>
<dbReference type="PANTHER" id="PTHR22594">
    <property type="entry name" value="ASPARTYL/LYSYL-TRNA SYNTHETASE"/>
    <property type="match status" value="1"/>
</dbReference>
<dbReference type="Pfam" id="PF02938">
    <property type="entry name" value="GAD"/>
    <property type="match status" value="1"/>
</dbReference>
<dbReference type="Pfam" id="PF00152">
    <property type="entry name" value="tRNA-synt_2"/>
    <property type="match status" value="1"/>
</dbReference>
<dbReference type="Pfam" id="PF01336">
    <property type="entry name" value="tRNA_anti-codon"/>
    <property type="match status" value="1"/>
</dbReference>
<dbReference type="PRINTS" id="PR01042">
    <property type="entry name" value="TRNASYNTHASP"/>
</dbReference>
<dbReference type="SUPFAM" id="SSF55681">
    <property type="entry name" value="Class II aaRS and biotin synthetases"/>
    <property type="match status" value="1"/>
</dbReference>
<dbReference type="SUPFAM" id="SSF55261">
    <property type="entry name" value="GAD domain-like"/>
    <property type="match status" value="1"/>
</dbReference>
<dbReference type="SUPFAM" id="SSF50249">
    <property type="entry name" value="Nucleic acid-binding proteins"/>
    <property type="match status" value="1"/>
</dbReference>
<dbReference type="PROSITE" id="PS50862">
    <property type="entry name" value="AA_TRNA_LIGASE_II"/>
    <property type="match status" value="1"/>
</dbReference>
<evidence type="ECO:0000255" key="1">
    <source>
        <dbReference type="HAMAP-Rule" id="MF_00044"/>
    </source>
</evidence>
<organism>
    <name type="scientific">Porphyromonas gingivalis (strain ATCC BAA-308 / W83)</name>
    <dbReference type="NCBI Taxonomy" id="242619"/>
    <lineage>
        <taxon>Bacteria</taxon>
        <taxon>Pseudomonadati</taxon>
        <taxon>Bacteroidota</taxon>
        <taxon>Bacteroidia</taxon>
        <taxon>Bacteroidales</taxon>
        <taxon>Porphyromonadaceae</taxon>
        <taxon>Porphyromonas</taxon>
    </lineage>
</organism>
<feature type="chain" id="PRO_0000110919" description="Aspartate--tRNA ligase">
    <location>
        <begin position="1"/>
        <end position="587"/>
    </location>
</feature>
<feature type="region of interest" description="Aspartate" evidence="1">
    <location>
        <begin position="198"/>
        <end position="201"/>
    </location>
</feature>
<feature type="binding site" evidence="1">
    <location>
        <position position="174"/>
    </location>
    <ligand>
        <name>L-aspartate</name>
        <dbReference type="ChEBI" id="CHEBI:29991"/>
    </ligand>
</feature>
<feature type="binding site" evidence="1">
    <location>
        <begin position="220"/>
        <end position="222"/>
    </location>
    <ligand>
        <name>ATP</name>
        <dbReference type="ChEBI" id="CHEBI:30616"/>
    </ligand>
</feature>
<feature type="binding site" evidence="1">
    <location>
        <position position="220"/>
    </location>
    <ligand>
        <name>L-aspartate</name>
        <dbReference type="ChEBI" id="CHEBI:29991"/>
    </ligand>
</feature>
<feature type="binding site" evidence="1">
    <location>
        <position position="229"/>
    </location>
    <ligand>
        <name>ATP</name>
        <dbReference type="ChEBI" id="CHEBI:30616"/>
    </ligand>
</feature>
<feature type="binding site" evidence="1">
    <location>
        <position position="447"/>
    </location>
    <ligand>
        <name>L-aspartate</name>
        <dbReference type="ChEBI" id="CHEBI:29991"/>
    </ligand>
</feature>
<feature type="binding site" evidence="1">
    <location>
        <position position="481"/>
    </location>
    <ligand>
        <name>ATP</name>
        <dbReference type="ChEBI" id="CHEBI:30616"/>
    </ligand>
</feature>
<feature type="binding site" evidence="1">
    <location>
        <position position="488"/>
    </location>
    <ligand>
        <name>L-aspartate</name>
        <dbReference type="ChEBI" id="CHEBI:29991"/>
    </ligand>
</feature>
<feature type="binding site" evidence="1">
    <location>
        <begin position="533"/>
        <end position="536"/>
    </location>
    <ligand>
        <name>ATP</name>
        <dbReference type="ChEBI" id="CHEBI:30616"/>
    </ligand>
</feature>
<proteinExistence type="inferred from homology"/>
<reference key="1">
    <citation type="journal article" date="2003" name="J. Bacteriol.">
        <title>Complete genome sequence of the oral pathogenic bacterium Porphyromonas gingivalis strain W83.</title>
        <authorList>
            <person name="Nelson K.E."/>
            <person name="Fleischmann R.D."/>
            <person name="DeBoy R.T."/>
            <person name="Paulsen I.T."/>
            <person name="Fouts D.E."/>
            <person name="Eisen J.A."/>
            <person name="Daugherty S.C."/>
            <person name="Dodson R.J."/>
            <person name="Durkin A.S."/>
            <person name="Gwinn M.L."/>
            <person name="Haft D.H."/>
            <person name="Kolonay J.F."/>
            <person name="Nelson W.C."/>
            <person name="Mason T.M."/>
            <person name="Tallon L."/>
            <person name="Gray J."/>
            <person name="Granger D."/>
            <person name="Tettelin H."/>
            <person name="Dong H."/>
            <person name="Galvin J.L."/>
            <person name="Duncan M.J."/>
            <person name="Dewhirst F.E."/>
            <person name="Fraser C.M."/>
        </authorList>
    </citation>
    <scope>NUCLEOTIDE SEQUENCE [LARGE SCALE GENOMIC DNA]</scope>
    <source>
        <strain>ATCC BAA-308 / W83</strain>
    </source>
</reference>